<protein>
    <recommendedName>
        <fullName evidence="1">Glycerol-3-phosphate acyltransferase</fullName>
    </recommendedName>
    <alternativeName>
        <fullName evidence="1">Acyl-PO4 G3P acyltransferase</fullName>
    </alternativeName>
    <alternativeName>
        <fullName evidence="1">Acyl-phosphate--glycerol-3-phosphate acyltransferase</fullName>
    </alternativeName>
    <alternativeName>
        <fullName evidence="1">G3P acyltransferase</fullName>
        <shortName evidence="1">GPAT</shortName>
        <ecNumber evidence="1">2.3.1.275</ecNumber>
    </alternativeName>
    <alternativeName>
        <fullName evidence="1">Lysophosphatidic acid synthase</fullName>
        <shortName evidence="1">LPA synthase</shortName>
    </alternativeName>
</protein>
<sequence>MIIFTATLIIILAYFLGSISGSILICKTLHFKDPRQHGSKNPGTTNILRIINYKIAIFVLLFDSLKGAVPIWLGTYFHIDPIYLYIIAISACIGHIYPIYFQFYGGKGVATAFGALTAISINFFIIIIITWILTVYLFRYASLGSIVTFIVITFYVWYIQYHHFEYIILLSLIILSQHKNNIKRLWNHQEKHIWNR</sequence>
<name>PLSY_BLOFL</name>
<organism>
    <name type="scientific">Blochmanniella floridana</name>
    <dbReference type="NCBI Taxonomy" id="203907"/>
    <lineage>
        <taxon>Bacteria</taxon>
        <taxon>Pseudomonadati</taxon>
        <taxon>Pseudomonadota</taxon>
        <taxon>Gammaproteobacteria</taxon>
        <taxon>Enterobacterales</taxon>
        <taxon>Enterobacteriaceae</taxon>
        <taxon>ant endosymbionts</taxon>
        <taxon>Candidatus Blochmanniella</taxon>
    </lineage>
</organism>
<reference key="1">
    <citation type="journal article" date="2003" name="Proc. Natl. Acad. Sci. U.S.A.">
        <title>The genome sequence of Blochmannia floridanus: comparative analysis of reduced genomes.</title>
        <authorList>
            <person name="Gil R."/>
            <person name="Silva F.J."/>
            <person name="Zientz E."/>
            <person name="Delmotte F."/>
            <person name="Gonzalez-Candelas F."/>
            <person name="Latorre A."/>
            <person name="Rausell C."/>
            <person name="Kamerbeek J."/>
            <person name="Gadau J."/>
            <person name="Hoelldobler B."/>
            <person name="van Ham R.C.H.J."/>
            <person name="Gross R."/>
            <person name="Moya A."/>
        </authorList>
    </citation>
    <scope>NUCLEOTIDE SEQUENCE [LARGE SCALE GENOMIC DNA]</scope>
</reference>
<keyword id="KW-0997">Cell inner membrane</keyword>
<keyword id="KW-1003">Cell membrane</keyword>
<keyword id="KW-0444">Lipid biosynthesis</keyword>
<keyword id="KW-0443">Lipid metabolism</keyword>
<keyword id="KW-0472">Membrane</keyword>
<keyword id="KW-0594">Phospholipid biosynthesis</keyword>
<keyword id="KW-1208">Phospholipid metabolism</keyword>
<keyword id="KW-1185">Reference proteome</keyword>
<keyword id="KW-0808">Transferase</keyword>
<keyword id="KW-0812">Transmembrane</keyword>
<keyword id="KW-1133">Transmembrane helix</keyword>
<gene>
    <name evidence="1" type="primary">plsY</name>
    <name type="ordered locus">Bfl060</name>
</gene>
<dbReference type="EC" id="2.3.1.275" evidence="1"/>
<dbReference type="EMBL" id="BX248583">
    <property type="protein sequence ID" value="CAD83585.1"/>
    <property type="molecule type" value="Genomic_DNA"/>
</dbReference>
<dbReference type="SMR" id="Q7VQQ8"/>
<dbReference type="STRING" id="203907.Bfl060"/>
<dbReference type="KEGG" id="bfl:Bfl060"/>
<dbReference type="eggNOG" id="COG0344">
    <property type="taxonomic scope" value="Bacteria"/>
</dbReference>
<dbReference type="HOGENOM" id="CLU_081254_0_2_6"/>
<dbReference type="OrthoDB" id="9777124at2"/>
<dbReference type="UniPathway" id="UPA00085"/>
<dbReference type="Proteomes" id="UP000002192">
    <property type="component" value="Chromosome"/>
</dbReference>
<dbReference type="GO" id="GO:0005886">
    <property type="term" value="C:plasma membrane"/>
    <property type="evidence" value="ECO:0007669"/>
    <property type="project" value="UniProtKB-SubCell"/>
</dbReference>
<dbReference type="GO" id="GO:0043772">
    <property type="term" value="F:acyl-phosphate glycerol-3-phosphate acyltransferase activity"/>
    <property type="evidence" value="ECO:0007669"/>
    <property type="project" value="UniProtKB-UniRule"/>
</dbReference>
<dbReference type="GO" id="GO:0008654">
    <property type="term" value="P:phospholipid biosynthetic process"/>
    <property type="evidence" value="ECO:0007669"/>
    <property type="project" value="UniProtKB-UniRule"/>
</dbReference>
<dbReference type="HAMAP" id="MF_01043">
    <property type="entry name" value="PlsY"/>
    <property type="match status" value="1"/>
</dbReference>
<dbReference type="InterPro" id="IPR003811">
    <property type="entry name" value="G3P_acylTferase_PlsY"/>
</dbReference>
<dbReference type="NCBIfam" id="TIGR00023">
    <property type="entry name" value="glycerol-3-phosphate 1-O-acyltransferase PlsY"/>
    <property type="match status" value="1"/>
</dbReference>
<dbReference type="PANTHER" id="PTHR30309:SF0">
    <property type="entry name" value="GLYCEROL-3-PHOSPHATE ACYLTRANSFERASE-RELATED"/>
    <property type="match status" value="1"/>
</dbReference>
<dbReference type="PANTHER" id="PTHR30309">
    <property type="entry name" value="INNER MEMBRANE PROTEIN YGIH"/>
    <property type="match status" value="1"/>
</dbReference>
<dbReference type="Pfam" id="PF02660">
    <property type="entry name" value="G3P_acyltransf"/>
    <property type="match status" value="1"/>
</dbReference>
<dbReference type="SMART" id="SM01207">
    <property type="entry name" value="G3P_acyltransf"/>
    <property type="match status" value="1"/>
</dbReference>
<comment type="function">
    <text evidence="1">Catalyzes the transfer of an acyl group from acyl-phosphate (acyl-PO(4)) to glycerol-3-phosphate (G3P) to form lysophosphatidic acid (LPA). This enzyme utilizes acyl-phosphate as fatty acyl donor, but not acyl-CoA or acyl-ACP.</text>
</comment>
<comment type="catalytic activity">
    <reaction evidence="1">
        <text>an acyl phosphate + sn-glycerol 3-phosphate = a 1-acyl-sn-glycero-3-phosphate + phosphate</text>
        <dbReference type="Rhea" id="RHEA:34075"/>
        <dbReference type="ChEBI" id="CHEBI:43474"/>
        <dbReference type="ChEBI" id="CHEBI:57597"/>
        <dbReference type="ChEBI" id="CHEBI:57970"/>
        <dbReference type="ChEBI" id="CHEBI:59918"/>
        <dbReference type="EC" id="2.3.1.275"/>
    </reaction>
</comment>
<comment type="pathway">
    <text evidence="1">Lipid metabolism; phospholipid metabolism.</text>
</comment>
<comment type="subunit">
    <text evidence="1">Probably interacts with PlsX.</text>
</comment>
<comment type="subcellular location">
    <subcellularLocation>
        <location evidence="1">Cell inner membrane</location>
        <topology evidence="1">Multi-pass membrane protein</topology>
    </subcellularLocation>
</comment>
<comment type="similarity">
    <text evidence="1">Belongs to the PlsY family.</text>
</comment>
<proteinExistence type="inferred from homology"/>
<evidence type="ECO:0000255" key="1">
    <source>
        <dbReference type="HAMAP-Rule" id="MF_01043"/>
    </source>
</evidence>
<accession>Q7VQQ8</accession>
<feature type="chain" id="PRO_0000188331" description="Glycerol-3-phosphate acyltransferase">
    <location>
        <begin position="1"/>
        <end position="196"/>
    </location>
</feature>
<feature type="transmembrane region" description="Helical" evidence="1">
    <location>
        <begin position="1"/>
        <end position="21"/>
    </location>
</feature>
<feature type="transmembrane region" description="Helical" evidence="1">
    <location>
        <begin position="55"/>
        <end position="75"/>
    </location>
</feature>
<feature type="transmembrane region" description="Helical" evidence="1">
    <location>
        <begin position="81"/>
        <end position="101"/>
    </location>
</feature>
<feature type="transmembrane region" description="Helical" evidence="1">
    <location>
        <begin position="118"/>
        <end position="138"/>
    </location>
</feature>
<feature type="transmembrane region" description="Helical" evidence="1">
    <location>
        <begin position="140"/>
        <end position="160"/>
    </location>
</feature>